<sequence>MVFRIASSPYTHNQRQTSRIMLLVVIAALPGIAAQTWFFGWGTLFQIVLAAITALVAEAIVLRLRKQSVASHLQDYSALLTGLLLAVSIPPLAPWWMVVLGTGFAIIIAKQLYGGLGQNPFNPAMIGYVVLLISFPVQMTSWLPPYEIAATTPDMLDTLRMIFSGHTASGGDMTLLRIGIDGISQATPLDTFKTSLRAGHSVEQIMQYPIYSGALAGVGWQWVNLAWLVGGVFLLWQKAIRWHIPVSFLLTLALCAALGWLFSPATLASPQLHLLSGATMLGAFFILTDPVTASTTNHGRLIFGALAGVLVWLIRSFGGYPDGVAFAVLLANITVPLIDYYTRPRVYGHRKG</sequence>
<protein>
    <recommendedName>
        <fullName evidence="1">Ion-translocating oxidoreductase complex subunit D</fullName>
        <ecNumber evidence="1">7.-.-.-</ecNumber>
    </recommendedName>
    <alternativeName>
        <fullName evidence="1">Rsx electron transport complex subunit D</fullName>
    </alternativeName>
</protein>
<accession>B5QV03</accession>
<dbReference type="EC" id="7.-.-.-" evidence="1"/>
<dbReference type="EMBL" id="AM933172">
    <property type="protein sequence ID" value="CAR33173.1"/>
    <property type="molecule type" value="Genomic_DNA"/>
</dbReference>
<dbReference type="RefSeq" id="WP_000231961.1">
    <property type="nucleotide sequence ID" value="NC_011294.1"/>
</dbReference>
<dbReference type="SMR" id="B5QV03"/>
<dbReference type="KEGG" id="set:SEN1591"/>
<dbReference type="HOGENOM" id="CLU_042020_0_0_6"/>
<dbReference type="Proteomes" id="UP000000613">
    <property type="component" value="Chromosome"/>
</dbReference>
<dbReference type="GO" id="GO:0005886">
    <property type="term" value="C:plasma membrane"/>
    <property type="evidence" value="ECO:0007669"/>
    <property type="project" value="UniProtKB-SubCell"/>
</dbReference>
<dbReference type="GO" id="GO:0022900">
    <property type="term" value="P:electron transport chain"/>
    <property type="evidence" value="ECO:0007669"/>
    <property type="project" value="UniProtKB-UniRule"/>
</dbReference>
<dbReference type="GO" id="GO:0055085">
    <property type="term" value="P:transmembrane transport"/>
    <property type="evidence" value="ECO:0007669"/>
    <property type="project" value="InterPro"/>
</dbReference>
<dbReference type="HAMAP" id="MF_00462">
    <property type="entry name" value="RsxD_RnfD"/>
    <property type="match status" value="1"/>
</dbReference>
<dbReference type="InterPro" id="IPR004338">
    <property type="entry name" value="NqrB/RnfD"/>
</dbReference>
<dbReference type="InterPro" id="IPR011303">
    <property type="entry name" value="RnfD_bac"/>
</dbReference>
<dbReference type="NCBIfam" id="NF002011">
    <property type="entry name" value="PRK00816.1"/>
    <property type="match status" value="1"/>
</dbReference>
<dbReference type="NCBIfam" id="TIGR01946">
    <property type="entry name" value="rnfD"/>
    <property type="match status" value="1"/>
</dbReference>
<dbReference type="PANTHER" id="PTHR30578">
    <property type="entry name" value="ELECTRON TRANSPORT COMPLEX PROTEIN RNFD"/>
    <property type="match status" value="1"/>
</dbReference>
<dbReference type="PANTHER" id="PTHR30578:SF0">
    <property type="entry name" value="ION-TRANSLOCATING OXIDOREDUCTASE COMPLEX SUBUNIT D"/>
    <property type="match status" value="1"/>
</dbReference>
<dbReference type="Pfam" id="PF03116">
    <property type="entry name" value="NQR2_RnfD_RnfE"/>
    <property type="match status" value="1"/>
</dbReference>
<proteinExistence type="inferred from homology"/>
<comment type="function">
    <text evidence="1">Part of a membrane-bound complex that couples electron transfer with translocation of ions across the membrane. Required to maintain the reduced state of SoxR.</text>
</comment>
<comment type="cofactor">
    <cofactor evidence="1">
        <name>FMN</name>
        <dbReference type="ChEBI" id="CHEBI:58210"/>
    </cofactor>
</comment>
<comment type="subunit">
    <text evidence="1">The complex is composed of six subunits: RsxA, RsxB, RsxC, RsxD, RsxE and RsxG.</text>
</comment>
<comment type="subcellular location">
    <subcellularLocation>
        <location evidence="1">Cell inner membrane</location>
        <topology evidence="1">Multi-pass membrane protein</topology>
    </subcellularLocation>
</comment>
<comment type="similarity">
    <text evidence="1">Belongs to the NqrB/RnfD family.</text>
</comment>
<name>RSXD_SALEP</name>
<reference key="1">
    <citation type="journal article" date="2008" name="Genome Res.">
        <title>Comparative genome analysis of Salmonella enteritidis PT4 and Salmonella gallinarum 287/91 provides insights into evolutionary and host adaptation pathways.</title>
        <authorList>
            <person name="Thomson N.R."/>
            <person name="Clayton D.J."/>
            <person name="Windhorst D."/>
            <person name="Vernikos G."/>
            <person name="Davidson S."/>
            <person name="Churcher C."/>
            <person name="Quail M.A."/>
            <person name="Stevens M."/>
            <person name="Jones M.A."/>
            <person name="Watson M."/>
            <person name="Barron A."/>
            <person name="Layton A."/>
            <person name="Pickard D."/>
            <person name="Kingsley R.A."/>
            <person name="Bignell A."/>
            <person name="Clark L."/>
            <person name="Harris B."/>
            <person name="Ormond D."/>
            <person name="Abdellah Z."/>
            <person name="Brooks K."/>
            <person name="Cherevach I."/>
            <person name="Chillingworth T."/>
            <person name="Woodward J."/>
            <person name="Norberczak H."/>
            <person name="Lord A."/>
            <person name="Arrowsmith C."/>
            <person name="Jagels K."/>
            <person name="Moule S."/>
            <person name="Mungall K."/>
            <person name="Saunders M."/>
            <person name="Whitehead S."/>
            <person name="Chabalgoity J.A."/>
            <person name="Maskell D."/>
            <person name="Humphreys T."/>
            <person name="Roberts M."/>
            <person name="Barrow P.A."/>
            <person name="Dougan G."/>
            <person name="Parkhill J."/>
        </authorList>
    </citation>
    <scope>NUCLEOTIDE SEQUENCE [LARGE SCALE GENOMIC DNA]</scope>
    <source>
        <strain>P125109</strain>
    </source>
</reference>
<keyword id="KW-0997">Cell inner membrane</keyword>
<keyword id="KW-1003">Cell membrane</keyword>
<keyword id="KW-0249">Electron transport</keyword>
<keyword id="KW-0285">Flavoprotein</keyword>
<keyword id="KW-0288">FMN</keyword>
<keyword id="KW-0472">Membrane</keyword>
<keyword id="KW-0597">Phosphoprotein</keyword>
<keyword id="KW-1278">Translocase</keyword>
<keyword id="KW-0812">Transmembrane</keyword>
<keyword id="KW-1133">Transmembrane helix</keyword>
<keyword id="KW-0813">Transport</keyword>
<organism>
    <name type="scientific">Salmonella enteritidis PT4 (strain P125109)</name>
    <dbReference type="NCBI Taxonomy" id="550537"/>
    <lineage>
        <taxon>Bacteria</taxon>
        <taxon>Pseudomonadati</taxon>
        <taxon>Pseudomonadota</taxon>
        <taxon>Gammaproteobacteria</taxon>
        <taxon>Enterobacterales</taxon>
        <taxon>Enterobacteriaceae</taxon>
        <taxon>Salmonella</taxon>
    </lineage>
</organism>
<evidence type="ECO:0000255" key="1">
    <source>
        <dbReference type="HAMAP-Rule" id="MF_00462"/>
    </source>
</evidence>
<gene>
    <name evidence="1" type="primary">rsxD</name>
    <name type="synonym">rnfD</name>
    <name type="ordered locus">SEN1591</name>
</gene>
<feature type="chain" id="PRO_1000125393" description="Ion-translocating oxidoreductase complex subunit D">
    <location>
        <begin position="1"/>
        <end position="352"/>
    </location>
</feature>
<feature type="transmembrane region" description="Helical" evidence="1">
    <location>
        <begin position="20"/>
        <end position="40"/>
    </location>
</feature>
<feature type="transmembrane region" description="Helical" evidence="1">
    <location>
        <begin position="42"/>
        <end position="62"/>
    </location>
</feature>
<feature type="transmembrane region" description="Helical" evidence="1">
    <location>
        <begin position="69"/>
        <end position="91"/>
    </location>
</feature>
<feature type="transmembrane region" description="Helical" evidence="1">
    <location>
        <begin position="123"/>
        <end position="143"/>
    </location>
</feature>
<feature type="transmembrane region" description="Helical" evidence="1">
    <location>
        <begin position="215"/>
        <end position="235"/>
    </location>
</feature>
<feature type="transmembrane region" description="Helical" evidence="1">
    <location>
        <begin position="242"/>
        <end position="262"/>
    </location>
</feature>
<feature type="transmembrane region" description="Helical" evidence="1">
    <location>
        <begin position="267"/>
        <end position="287"/>
    </location>
</feature>
<feature type="transmembrane region" description="Helical" evidence="1">
    <location>
        <begin position="301"/>
        <end position="321"/>
    </location>
</feature>
<feature type="transmembrane region" description="Helical" evidence="1">
    <location>
        <begin position="322"/>
        <end position="342"/>
    </location>
</feature>
<feature type="modified residue" description="FMN phosphoryl threonine" evidence="1">
    <location>
        <position position="187"/>
    </location>
</feature>